<reference key="1">
    <citation type="submission" date="2007-08" db="EMBL/GenBank/DDBJ databases">
        <title>Complete sequence of Roseiflexus castenholzii DSM 13941.</title>
        <authorList>
            <consortium name="US DOE Joint Genome Institute"/>
            <person name="Copeland A."/>
            <person name="Lucas S."/>
            <person name="Lapidus A."/>
            <person name="Barry K."/>
            <person name="Glavina del Rio T."/>
            <person name="Dalin E."/>
            <person name="Tice H."/>
            <person name="Pitluck S."/>
            <person name="Thompson L.S."/>
            <person name="Brettin T."/>
            <person name="Bruce D."/>
            <person name="Detter J.C."/>
            <person name="Han C."/>
            <person name="Tapia R."/>
            <person name="Schmutz J."/>
            <person name="Larimer F."/>
            <person name="Land M."/>
            <person name="Hauser L."/>
            <person name="Kyrpides N."/>
            <person name="Mikhailova N."/>
            <person name="Bryant D.A."/>
            <person name="Hanada S."/>
            <person name="Tsukatani Y."/>
            <person name="Richardson P."/>
        </authorList>
    </citation>
    <scope>NUCLEOTIDE SEQUENCE [LARGE SCALE GENOMIC DNA]</scope>
    <source>
        <strain>DSM 13941 / HLO8</strain>
    </source>
</reference>
<gene>
    <name evidence="1" type="primary">fmt</name>
    <name type="ordered locus">Rcas_3225</name>
</gene>
<evidence type="ECO:0000255" key="1">
    <source>
        <dbReference type="HAMAP-Rule" id="MF_00182"/>
    </source>
</evidence>
<dbReference type="EC" id="2.1.2.9" evidence="1"/>
<dbReference type="EMBL" id="CP000804">
    <property type="protein sequence ID" value="ABU59279.1"/>
    <property type="molecule type" value="Genomic_DNA"/>
</dbReference>
<dbReference type="SMR" id="A7NNY4"/>
<dbReference type="STRING" id="383372.Rcas_3225"/>
<dbReference type="KEGG" id="rca:Rcas_3225"/>
<dbReference type="eggNOG" id="COG0223">
    <property type="taxonomic scope" value="Bacteria"/>
</dbReference>
<dbReference type="HOGENOM" id="CLU_033347_2_0_0"/>
<dbReference type="OrthoDB" id="9802815at2"/>
<dbReference type="Proteomes" id="UP000000263">
    <property type="component" value="Chromosome"/>
</dbReference>
<dbReference type="GO" id="GO:0005829">
    <property type="term" value="C:cytosol"/>
    <property type="evidence" value="ECO:0007669"/>
    <property type="project" value="TreeGrafter"/>
</dbReference>
<dbReference type="GO" id="GO:0004479">
    <property type="term" value="F:methionyl-tRNA formyltransferase activity"/>
    <property type="evidence" value="ECO:0007669"/>
    <property type="project" value="UniProtKB-UniRule"/>
</dbReference>
<dbReference type="CDD" id="cd08646">
    <property type="entry name" value="FMT_core_Met-tRNA-FMT_N"/>
    <property type="match status" value="1"/>
</dbReference>
<dbReference type="CDD" id="cd08704">
    <property type="entry name" value="Met_tRNA_FMT_C"/>
    <property type="match status" value="1"/>
</dbReference>
<dbReference type="Gene3D" id="3.40.50.12230">
    <property type="match status" value="1"/>
</dbReference>
<dbReference type="HAMAP" id="MF_00182">
    <property type="entry name" value="Formyl_trans"/>
    <property type="match status" value="1"/>
</dbReference>
<dbReference type="InterPro" id="IPR005794">
    <property type="entry name" value="Fmt"/>
</dbReference>
<dbReference type="InterPro" id="IPR005793">
    <property type="entry name" value="Formyl_trans_C"/>
</dbReference>
<dbReference type="InterPro" id="IPR002376">
    <property type="entry name" value="Formyl_transf_N"/>
</dbReference>
<dbReference type="InterPro" id="IPR036477">
    <property type="entry name" value="Formyl_transf_N_sf"/>
</dbReference>
<dbReference type="InterPro" id="IPR011034">
    <property type="entry name" value="Formyl_transferase-like_C_sf"/>
</dbReference>
<dbReference type="InterPro" id="IPR044135">
    <property type="entry name" value="Met-tRNA-FMT_C"/>
</dbReference>
<dbReference type="InterPro" id="IPR041711">
    <property type="entry name" value="Met-tRNA-FMT_N"/>
</dbReference>
<dbReference type="NCBIfam" id="TIGR00460">
    <property type="entry name" value="fmt"/>
    <property type="match status" value="1"/>
</dbReference>
<dbReference type="PANTHER" id="PTHR11138">
    <property type="entry name" value="METHIONYL-TRNA FORMYLTRANSFERASE"/>
    <property type="match status" value="1"/>
</dbReference>
<dbReference type="PANTHER" id="PTHR11138:SF5">
    <property type="entry name" value="METHIONYL-TRNA FORMYLTRANSFERASE, MITOCHONDRIAL"/>
    <property type="match status" value="1"/>
</dbReference>
<dbReference type="Pfam" id="PF02911">
    <property type="entry name" value="Formyl_trans_C"/>
    <property type="match status" value="1"/>
</dbReference>
<dbReference type="Pfam" id="PF00551">
    <property type="entry name" value="Formyl_trans_N"/>
    <property type="match status" value="1"/>
</dbReference>
<dbReference type="SUPFAM" id="SSF50486">
    <property type="entry name" value="FMT C-terminal domain-like"/>
    <property type="match status" value="1"/>
</dbReference>
<dbReference type="SUPFAM" id="SSF53328">
    <property type="entry name" value="Formyltransferase"/>
    <property type="match status" value="1"/>
</dbReference>
<keyword id="KW-0648">Protein biosynthesis</keyword>
<keyword id="KW-1185">Reference proteome</keyword>
<keyword id="KW-0808">Transferase</keyword>
<sequence length="313" mass="33293">MSLRIVFLGSPTFAVLPLERLVADSRYQVVGVVTQPDRPAGRGKMPVATPVKQAALRLGLPVLTPETLRDPAAVADLADLRPDVGVVAAYGEILRRDVLAIPPLGYVNIHPSLLPLYRGPSPVAGAILNGDAETGVTIMVIEAKMDAGPILAQRVVPLPPDARTGSLTRELFAIGADMLLETLDAYATGAITPHPQDHARATFTKLLSREDGIIDWSQPALRIERMTRAYDPWPGATTTWRGAPLKIIAARVRSDRHSDAPPGTLLDTAEGLAVATGDGLLVLETVQPAGKRPLPAADWRRGVRLTGGERLGG</sequence>
<organism>
    <name type="scientific">Roseiflexus castenholzii (strain DSM 13941 / HLO8)</name>
    <dbReference type="NCBI Taxonomy" id="383372"/>
    <lineage>
        <taxon>Bacteria</taxon>
        <taxon>Bacillati</taxon>
        <taxon>Chloroflexota</taxon>
        <taxon>Chloroflexia</taxon>
        <taxon>Chloroflexales</taxon>
        <taxon>Roseiflexineae</taxon>
        <taxon>Roseiflexaceae</taxon>
        <taxon>Roseiflexus</taxon>
    </lineage>
</organism>
<proteinExistence type="inferred from homology"/>
<comment type="function">
    <text evidence="1">Attaches a formyl group to the free amino group of methionyl-tRNA(fMet). The formyl group appears to play a dual role in the initiator identity of N-formylmethionyl-tRNA by promoting its recognition by IF2 and preventing the misappropriation of this tRNA by the elongation apparatus.</text>
</comment>
<comment type="catalytic activity">
    <reaction evidence="1">
        <text>L-methionyl-tRNA(fMet) + (6R)-10-formyltetrahydrofolate = N-formyl-L-methionyl-tRNA(fMet) + (6S)-5,6,7,8-tetrahydrofolate + H(+)</text>
        <dbReference type="Rhea" id="RHEA:24380"/>
        <dbReference type="Rhea" id="RHEA-COMP:9952"/>
        <dbReference type="Rhea" id="RHEA-COMP:9953"/>
        <dbReference type="ChEBI" id="CHEBI:15378"/>
        <dbReference type="ChEBI" id="CHEBI:57453"/>
        <dbReference type="ChEBI" id="CHEBI:78530"/>
        <dbReference type="ChEBI" id="CHEBI:78844"/>
        <dbReference type="ChEBI" id="CHEBI:195366"/>
        <dbReference type="EC" id="2.1.2.9"/>
    </reaction>
</comment>
<comment type="similarity">
    <text evidence="1">Belongs to the Fmt family.</text>
</comment>
<protein>
    <recommendedName>
        <fullName evidence="1">Methionyl-tRNA formyltransferase</fullName>
        <ecNumber evidence="1">2.1.2.9</ecNumber>
    </recommendedName>
</protein>
<accession>A7NNY4</accession>
<feature type="chain" id="PRO_1000077315" description="Methionyl-tRNA formyltransferase">
    <location>
        <begin position="1"/>
        <end position="313"/>
    </location>
</feature>
<feature type="binding site" evidence="1">
    <location>
        <begin position="112"/>
        <end position="115"/>
    </location>
    <ligand>
        <name>(6S)-5,6,7,8-tetrahydrofolate</name>
        <dbReference type="ChEBI" id="CHEBI:57453"/>
    </ligand>
</feature>
<name>FMT_ROSCS</name>